<gene>
    <name evidence="1" type="primary">rnhA</name>
    <name type="ordered locus">Cj1636c</name>
</gene>
<name>RNH_CAMJE</name>
<feature type="chain" id="PRO_0000195369" description="Ribonuclease HI">
    <location>
        <begin position="1"/>
        <end position="146"/>
    </location>
</feature>
<feature type="domain" description="RNase H type-1" evidence="2">
    <location>
        <begin position="1"/>
        <end position="136"/>
    </location>
</feature>
<feature type="binding site" evidence="1">
    <location>
        <position position="9"/>
    </location>
    <ligand>
        <name>Mg(2+)</name>
        <dbReference type="ChEBI" id="CHEBI:18420"/>
        <label>1</label>
    </ligand>
</feature>
<feature type="binding site" evidence="1">
    <location>
        <position position="9"/>
    </location>
    <ligand>
        <name>Mg(2+)</name>
        <dbReference type="ChEBI" id="CHEBI:18420"/>
        <label>2</label>
    </ligand>
</feature>
<feature type="binding site" evidence="1">
    <location>
        <position position="47"/>
    </location>
    <ligand>
        <name>Mg(2+)</name>
        <dbReference type="ChEBI" id="CHEBI:18420"/>
        <label>1</label>
    </ligand>
</feature>
<feature type="binding site" evidence="1">
    <location>
        <position position="69"/>
    </location>
    <ligand>
        <name>Mg(2+)</name>
        <dbReference type="ChEBI" id="CHEBI:18420"/>
        <label>1</label>
    </ligand>
</feature>
<feature type="binding site" evidence="1">
    <location>
        <position position="128"/>
    </location>
    <ligand>
        <name>Mg(2+)</name>
        <dbReference type="ChEBI" id="CHEBI:18420"/>
        <label>2</label>
    </ligand>
</feature>
<accession>Q9PM39</accession>
<accession>Q0P7Z2</accession>
<sequence>MKHIEIYTDGSCLNNPGFGGWAYILRYKEYQKEGFGAEANTTNNRMELMAIIESLKALKEPCEISLFTDSNLMVQSINEWLEGWIKKDFKGKKNIDLWKEYIKVAKSHKIKAFWVKAHNGHLENERCDTLAREAALKIARENDEKH</sequence>
<keyword id="KW-0963">Cytoplasm</keyword>
<keyword id="KW-0255">Endonuclease</keyword>
<keyword id="KW-0378">Hydrolase</keyword>
<keyword id="KW-0460">Magnesium</keyword>
<keyword id="KW-0479">Metal-binding</keyword>
<keyword id="KW-0540">Nuclease</keyword>
<keyword id="KW-1185">Reference proteome</keyword>
<evidence type="ECO:0000255" key="1">
    <source>
        <dbReference type="HAMAP-Rule" id="MF_00042"/>
    </source>
</evidence>
<evidence type="ECO:0000255" key="2">
    <source>
        <dbReference type="PROSITE-ProRule" id="PRU00408"/>
    </source>
</evidence>
<organism>
    <name type="scientific">Campylobacter jejuni subsp. jejuni serotype O:2 (strain ATCC 700819 / NCTC 11168)</name>
    <dbReference type="NCBI Taxonomy" id="192222"/>
    <lineage>
        <taxon>Bacteria</taxon>
        <taxon>Pseudomonadati</taxon>
        <taxon>Campylobacterota</taxon>
        <taxon>Epsilonproteobacteria</taxon>
        <taxon>Campylobacterales</taxon>
        <taxon>Campylobacteraceae</taxon>
        <taxon>Campylobacter</taxon>
    </lineage>
</organism>
<comment type="function">
    <text evidence="1">Endonuclease that specifically degrades the RNA of RNA-DNA hybrids.</text>
</comment>
<comment type="catalytic activity">
    <reaction evidence="1">
        <text>Endonucleolytic cleavage to 5'-phosphomonoester.</text>
        <dbReference type="EC" id="3.1.26.4"/>
    </reaction>
</comment>
<comment type="cofactor">
    <cofactor evidence="1">
        <name>Mg(2+)</name>
        <dbReference type="ChEBI" id="CHEBI:18420"/>
    </cofactor>
    <text evidence="1">Binds 1 Mg(2+) ion per subunit. May bind a second metal ion at a regulatory site, or after substrate binding.</text>
</comment>
<comment type="subunit">
    <text evidence="1">Monomer.</text>
</comment>
<comment type="subcellular location">
    <subcellularLocation>
        <location evidence="1">Cytoplasm</location>
    </subcellularLocation>
</comment>
<comment type="similarity">
    <text evidence="1">Belongs to the RNase H family.</text>
</comment>
<proteinExistence type="inferred from homology"/>
<protein>
    <recommendedName>
        <fullName evidence="1">Ribonuclease HI</fullName>
        <shortName evidence="1">RNase HI</shortName>
        <ecNumber evidence="1">3.1.26.4</ecNumber>
    </recommendedName>
</protein>
<reference key="1">
    <citation type="journal article" date="2000" name="Nature">
        <title>The genome sequence of the food-borne pathogen Campylobacter jejuni reveals hypervariable sequences.</title>
        <authorList>
            <person name="Parkhill J."/>
            <person name="Wren B.W."/>
            <person name="Mungall K.L."/>
            <person name="Ketley J.M."/>
            <person name="Churcher C.M."/>
            <person name="Basham D."/>
            <person name="Chillingworth T."/>
            <person name="Davies R.M."/>
            <person name="Feltwell T."/>
            <person name="Holroyd S."/>
            <person name="Jagels K."/>
            <person name="Karlyshev A.V."/>
            <person name="Moule S."/>
            <person name="Pallen M.J."/>
            <person name="Penn C.W."/>
            <person name="Quail M.A."/>
            <person name="Rajandream M.A."/>
            <person name="Rutherford K.M."/>
            <person name="van Vliet A.H.M."/>
            <person name="Whitehead S."/>
            <person name="Barrell B.G."/>
        </authorList>
    </citation>
    <scope>NUCLEOTIDE SEQUENCE [LARGE SCALE GENOMIC DNA]</scope>
    <source>
        <strain>ATCC 700819 / NCTC 11168</strain>
    </source>
</reference>
<dbReference type="EC" id="3.1.26.4" evidence="1"/>
<dbReference type="EMBL" id="AL111168">
    <property type="protein sequence ID" value="CAL35733.1"/>
    <property type="molecule type" value="Genomic_DNA"/>
</dbReference>
<dbReference type="PIR" id="B81260">
    <property type="entry name" value="B81260"/>
</dbReference>
<dbReference type="RefSeq" id="WP_002851277.1">
    <property type="nucleotide sequence ID" value="NZ_SZUC01000002.1"/>
</dbReference>
<dbReference type="RefSeq" id="YP_002345005.1">
    <property type="nucleotide sequence ID" value="NC_002163.1"/>
</dbReference>
<dbReference type="SMR" id="Q9PM39"/>
<dbReference type="IntAct" id="Q9PM39">
    <property type="interactions" value="26"/>
</dbReference>
<dbReference type="STRING" id="192222.Cj1636c"/>
<dbReference type="PaxDb" id="192222-Cj1636c"/>
<dbReference type="EnsemblBacteria" id="CAL35733">
    <property type="protein sequence ID" value="CAL35733"/>
    <property type="gene ID" value="Cj1636c"/>
</dbReference>
<dbReference type="GeneID" id="905909"/>
<dbReference type="KEGG" id="cje:Cj1636c"/>
<dbReference type="PATRIC" id="fig|192222.6.peg.1612"/>
<dbReference type="eggNOG" id="COG0328">
    <property type="taxonomic scope" value="Bacteria"/>
</dbReference>
<dbReference type="HOGENOM" id="CLU_030894_6_2_7"/>
<dbReference type="OrthoDB" id="7845843at2"/>
<dbReference type="Proteomes" id="UP000000799">
    <property type="component" value="Chromosome"/>
</dbReference>
<dbReference type="GO" id="GO:0005737">
    <property type="term" value="C:cytoplasm"/>
    <property type="evidence" value="ECO:0007669"/>
    <property type="project" value="UniProtKB-SubCell"/>
</dbReference>
<dbReference type="GO" id="GO:0000287">
    <property type="term" value="F:magnesium ion binding"/>
    <property type="evidence" value="ECO:0007669"/>
    <property type="project" value="UniProtKB-UniRule"/>
</dbReference>
<dbReference type="GO" id="GO:0003676">
    <property type="term" value="F:nucleic acid binding"/>
    <property type="evidence" value="ECO:0007669"/>
    <property type="project" value="InterPro"/>
</dbReference>
<dbReference type="GO" id="GO:0004523">
    <property type="term" value="F:RNA-DNA hybrid ribonuclease activity"/>
    <property type="evidence" value="ECO:0007669"/>
    <property type="project" value="UniProtKB-UniRule"/>
</dbReference>
<dbReference type="GO" id="GO:0043137">
    <property type="term" value="P:DNA replication, removal of RNA primer"/>
    <property type="evidence" value="ECO:0007669"/>
    <property type="project" value="TreeGrafter"/>
</dbReference>
<dbReference type="CDD" id="cd09278">
    <property type="entry name" value="RNase_HI_prokaryote_like"/>
    <property type="match status" value="1"/>
</dbReference>
<dbReference type="Gene3D" id="3.30.420.10">
    <property type="entry name" value="Ribonuclease H-like superfamily/Ribonuclease H"/>
    <property type="match status" value="1"/>
</dbReference>
<dbReference type="HAMAP" id="MF_00042">
    <property type="entry name" value="RNase_H"/>
    <property type="match status" value="1"/>
</dbReference>
<dbReference type="InterPro" id="IPR050092">
    <property type="entry name" value="RNase_H"/>
</dbReference>
<dbReference type="InterPro" id="IPR012337">
    <property type="entry name" value="RNaseH-like_sf"/>
</dbReference>
<dbReference type="InterPro" id="IPR002156">
    <property type="entry name" value="RNaseH_domain"/>
</dbReference>
<dbReference type="InterPro" id="IPR036397">
    <property type="entry name" value="RNaseH_sf"/>
</dbReference>
<dbReference type="InterPro" id="IPR022892">
    <property type="entry name" value="RNaseHI"/>
</dbReference>
<dbReference type="NCBIfam" id="NF001236">
    <property type="entry name" value="PRK00203.1"/>
    <property type="match status" value="1"/>
</dbReference>
<dbReference type="PANTHER" id="PTHR10642">
    <property type="entry name" value="RIBONUCLEASE H1"/>
    <property type="match status" value="1"/>
</dbReference>
<dbReference type="PANTHER" id="PTHR10642:SF26">
    <property type="entry name" value="RIBONUCLEASE H1"/>
    <property type="match status" value="1"/>
</dbReference>
<dbReference type="Pfam" id="PF00075">
    <property type="entry name" value="RNase_H"/>
    <property type="match status" value="1"/>
</dbReference>
<dbReference type="SUPFAM" id="SSF53098">
    <property type="entry name" value="Ribonuclease H-like"/>
    <property type="match status" value="1"/>
</dbReference>
<dbReference type="PROSITE" id="PS50879">
    <property type="entry name" value="RNASE_H_1"/>
    <property type="match status" value="1"/>
</dbReference>